<sequence length="89" mass="10117">MALSAESKAALVKEFQVAEGDTGSPEVQVALLTKNIEGLQGHFKAHIHDHHSRRGLIRMVNQRRKLLDYLKRKDAARYTSLIKKLGLRR</sequence>
<feature type="chain" id="PRO_1000086806" description="Small ribosomal subunit protein uS15">
    <location>
        <begin position="1"/>
        <end position="89"/>
    </location>
</feature>
<accession>A6VU32</accession>
<gene>
    <name evidence="1" type="primary">rpsO</name>
    <name type="ordered locus">Mmwyl1_1030</name>
</gene>
<dbReference type="EMBL" id="CP000749">
    <property type="protein sequence ID" value="ABR69961.1"/>
    <property type="molecule type" value="Genomic_DNA"/>
</dbReference>
<dbReference type="SMR" id="A6VU32"/>
<dbReference type="STRING" id="400668.Mmwyl1_1030"/>
<dbReference type="KEGG" id="mmw:Mmwyl1_1030"/>
<dbReference type="eggNOG" id="COG0184">
    <property type="taxonomic scope" value="Bacteria"/>
</dbReference>
<dbReference type="HOGENOM" id="CLU_148518_0_0_6"/>
<dbReference type="OrthoDB" id="9799262at2"/>
<dbReference type="GO" id="GO:0022627">
    <property type="term" value="C:cytosolic small ribosomal subunit"/>
    <property type="evidence" value="ECO:0007669"/>
    <property type="project" value="TreeGrafter"/>
</dbReference>
<dbReference type="GO" id="GO:0019843">
    <property type="term" value="F:rRNA binding"/>
    <property type="evidence" value="ECO:0007669"/>
    <property type="project" value="UniProtKB-UniRule"/>
</dbReference>
<dbReference type="GO" id="GO:0003735">
    <property type="term" value="F:structural constituent of ribosome"/>
    <property type="evidence" value="ECO:0007669"/>
    <property type="project" value="InterPro"/>
</dbReference>
<dbReference type="GO" id="GO:0006412">
    <property type="term" value="P:translation"/>
    <property type="evidence" value="ECO:0007669"/>
    <property type="project" value="UniProtKB-UniRule"/>
</dbReference>
<dbReference type="CDD" id="cd00353">
    <property type="entry name" value="Ribosomal_S15p_S13e"/>
    <property type="match status" value="1"/>
</dbReference>
<dbReference type="FunFam" id="1.10.287.10:FF:000002">
    <property type="entry name" value="30S ribosomal protein S15"/>
    <property type="match status" value="1"/>
</dbReference>
<dbReference type="Gene3D" id="6.10.250.3130">
    <property type="match status" value="1"/>
</dbReference>
<dbReference type="Gene3D" id="1.10.287.10">
    <property type="entry name" value="S15/NS1, RNA-binding"/>
    <property type="match status" value="1"/>
</dbReference>
<dbReference type="HAMAP" id="MF_01343_B">
    <property type="entry name" value="Ribosomal_uS15_B"/>
    <property type="match status" value="1"/>
</dbReference>
<dbReference type="InterPro" id="IPR000589">
    <property type="entry name" value="Ribosomal_uS15"/>
</dbReference>
<dbReference type="InterPro" id="IPR005290">
    <property type="entry name" value="Ribosomal_uS15_bac-type"/>
</dbReference>
<dbReference type="InterPro" id="IPR009068">
    <property type="entry name" value="uS15_NS1_RNA-bd_sf"/>
</dbReference>
<dbReference type="NCBIfam" id="TIGR00952">
    <property type="entry name" value="S15_bact"/>
    <property type="match status" value="1"/>
</dbReference>
<dbReference type="PANTHER" id="PTHR23321">
    <property type="entry name" value="RIBOSOMAL PROTEIN S15, BACTERIAL AND ORGANELLAR"/>
    <property type="match status" value="1"/>
</dbReference>
<dbReference type="PANTHER" id="PTHR23321:SF26">
    <property type="entry name" value="SMALL RIBOSOMAL SUBUNIT PROTEIN US15M"/>
    <property type="match status" value="1"/>
</dbReference>
<dbReference type="Pfam" id="PF00312">
    <property type="entry name" value="Ribosomal_S15"/>
    <property type="match status" value="1"/>
</dbReference>
<dbReference type="SMART" id="SM01387">
    <property type="entry name" value="Ribosomal_S15"/>
    <property type="match status" value="1"/>
</dbReference>
<dbReference type="SUPFAM" id="SSF47060">
    <property type="entry name" value="S15/NS1 RNA-binding domain"/>
    <property type="match status" value="1"/>
</dbReference>
<dbReference type="PROSITE" id="PS00362">
    <property type="entry name" value="RIBOSOMAL_S15"/>
    <property type="match status" value="1"/>
</dbReference>
<protein>
    <recommendedName>
        <fullName evidence="1">Small ribosomal subunit protein uS15</fullName>
    </recommendedName>
    <alternativeName>
        <fullName evidence="2">30S ribosomal protein S15</fullName>
    </alternativeName>
</protein>
<keyword id="KW-0687">Ribonucleoprotein</keyword>
<keyword id="KW-0689">Ribosomal protein</keyword>
<keyword id="KW-0694">RNA-binding</keyword>
<keyword id="KW-0699">rRNA-binding</keyword>
<proteinExistence type="inferred from homology"/>
<name>RS15_MARMS</name>
<evidence type="ECO:0000255" key="1">
    <source>
        <dbReference type="HAMAP-Rule" id="MF_01343"/>
    </source>
</evidence>
<evidence type="ECO:0000305" key="2"/>
<comment type="function">
    <text evidence="1">One of the primary rRNA binding proteins, it binds directly to 16S rRNA where it helps nucleate assembly of the platform of the 30S subunit by binding and bridging several RNA helices of the 16S rRNA.</text>
</comment>
<comment type="function">
    <text evidence="1">Forms an intersubunit bridge (bridge B4) with the 23S rRNA of the 50S subunit in the ribosome.</text>
</comment>
<comment type="subunit">
    <text evidence="1">Part of the 30S ribosomal subunit. Forms a bridge to the 50S subunit in the 70S ribosome, contacting the 23S rRNA.</text>
</comment>
<comment type="similarity">
    <text evidence="1">Belongs to the universal ribosomal protein uS15 family.</text>
</comment>
<reference key="1">
    <citation type="submission" date="2007-06" db="EMBL/GenBank/DDBJ databases">
        <title>Complete sequence of Marinomonas sp. MWYL1.</title>
        <authorList>
            <consortium name="US DOE Joint Genome Institute"/>
            <person name="Copeland A."/>
            <person name="Lucas S."/>
            <person name="Lapidus A."/>
            <person name="Barry K."/>
            <person name="Glavina del Rio T."/>
            <person name="Dalin E."/>
            <person name="Tice H."/>
            <person name="Pitluck S."/>
            <person name="Kiss H."/>
            <person name="Brettin T."/>
            <person name="Bruce D."/>
            <person name="Detter J.C."/>
            <person name="Han C."/>
            <person name="Schmutz J."/>
            <person name="Larimer F."/>
            <person name="Land M."/>
            <person name="Hauser L."/>
            <person name="Kyrpides N."/>
            <person name="Kim E."/>
            <person name="Johnston A.W.B."/>
            <person name="Todd J.D."/>
            <person name="Rogers R."/>
            <person name="Wexler M."/>
            <person name="Bond P.L."/>
            <person name="Li Y."/>
            <person name="Richardson P."/>
        </authorList>
    </citation>
    <scope>NUCLEOTIDE SEQUENCE [LARGE SCALE GENOMIC DNA]</scope>
    <source>
        <strain>MWYL1</strain>
    </source>
</reference>
<organism>
    <name type="scientific">Marinomonas sp. (strain MWYL1)</name>
    <dbReference type="NCBI Taxonomy" id="400668"/>
    <lineage>
        <taxon>Bacteria</taxon>
        <taxon>Pseudomonadati</taxon>
        <taxon>Pseudomonadota</taxon>
        <taxon>Gammaproteobacteria</taxon>
        <taxon>Oceanospirillales</taxon>
        <taxon>Oceanospirillaceae</taxon>
        <taxon>Marinomonas</taxon>
    </lineage>
</organism>